<protein>
    <recommendedName>
        <fullName evidence="1">Imidazoleglycerol-phosphate dehydratase</fullName>
        <shortName evidence="1">IGPD</shortName>
        <ecNumber evidence="1">4.2.1.19</ecNumber>
    </recommendedName>
</protein>
<name>HIS7_GLUDA</name>
<keyword id="KW-0028">Amino-acid biosynthesis</keyword>
<keyword id="KW-0963">Cytoplasm</keyword>
<keyword id="KW-0368">Histidine biosynthesis</keyword>
<keyword id="KW-0456">Lyase</keyword>
<keyword id="KW-1185">Reference proteome</keyword>
<comment type="catalytic activity">
    <reaction evidence="1">
        <text>D-erythro-1-(imidazol-4-yl)glycerol 3-phosphate = 3-(imidazol-4-yl)-2-oxopropyl phosphate + H2O</text>
        <dbReference type="Rhea" id="RHEA:11040"/>
        <dbReference type="ChEBI" id="CHEBI:15377"/>
        <dbReference type="ChEBI" id="CHEBI:57766"/>
        <dbReference type="ChEBI" id="CHEBI:58278"/>
        <dbReference type="EC" id="4.2.1.19"/>
    </reaction>
</comment>
<comment type="pathway">
    <text evidence="1">Amino-acid biosynthesis; L-histidine biosynthesis; L-histidine from 5-phospho-alpha-D-ribose 1-diphosphate: step 6/9.</text>
</comment>
<comment type="subcellular location">
    <subcellularLocation>
        <location evidence="1">Cytoplasm</location>
    </subcellularLocation>
</comment>
<comment type="similarity">
    <text evidence="1">Belongs to the imidazoleglycerol-phosphate dehydratase family.</text>
</comment>
<dbReference type="EC" id="4.2.1.19" evidence="1"/>
<dbReference type="EMBL" id="AM889285">
    <property type="protein sequence ID" value="CAP54016.1"/>
    <property type="molecule type" value="Genomic_DNA"/>
</dbReference>
<dbReference type="EMBL" id="CP001189">
    <property type="protein sequence ID" value="ACI51397.1"/>
    <property type="molecule type" value="Genomic_DNA"/>
</dbReference>
<dbReference type="RefSeq" id="WP_012222320.1">
    <property type="nucleotide sequence ID" value="NC_010125.1"/>
</dbReference>
<dbReference type="SMR" id="A9GZY1"/>
<dbReference type="STRING" id="272568.GDI0073"/>
<dbReference type="KEGG" id="gdi:GDI0073"/>
<dbReference type="KEGG" id="gdj:Gdia_1619"/>
<dbReference type="eggNOG" id="COG0131">
    <property type="taxonomic scope" value="Bacteria"/>
</dbReference>
<dbReference type="HOGENOM" id="CLU_044308_3_0_5"/>
<dbReference type="OrthoDB" id="9813612at2"/>
<dbReference type="UniPathway" id="UPA00031">
    <property type="reaction ID" value="UER00011"/>
</dbReference>
<dbReference type="Proteomes" id="UP000001176">
    <property type="component" value="Chromosome"/>
</dbReference>
<dbReference type="GO" id="GO:0005737">
    <property type="term" value="C:cytoplasm"/>
    <property type="evidence" value="ECO:0007669"/>
    <property type="project" value="UniProtKB-SubCell"/>
</dbReference>
<dbReference type="GO" id="GO:0004424">
    <property type="term" value="F:imidazoleglycerol-phosphate dehydratase activity"/>
    <property type="evidence" value="ECO:0007669"/>
    <property type="project" value="UniProtKB-UniRule"/>
</dbReference>
<dbReference type="GO" id="GO:0000105">
    <property type="term" value="P:L-histidine biosynthetic process"/>
    <property type="evidence" value="ECO:0007669"/>
    <property type="project" value="UniProtKB-UniRule"/>
</dbReference>
<dbReference type="CDD" id="cd07914">
    <property type="entry name" value="IGPD"/>
    <property type="match status" value="1"/>
</dbReference>
<dbReference type="FunFam" id="3.30.230.40:FF:000001">
    <property type="entry name" value="Imidazoleglycerol-phosphate dehydratase HisB"/>
    <property type="match status" value="1"/>
</dbReference>
<dbReference type="FunFam" id="3.30.230.40:FF:000003">
    <property type="entry name" value="Imidazoleglycerol-phosphate dehydratase HisB"/>
    <property type="match status" value="1"/>
</dbReference>
<dbReference type="Gene3D" id="3.30.230.40">
    <property type="entry name" value="Imidazole glycerol phosphate dehydratase, domain 1"/>
    <property type="match status" value="2"/>
</dbReference>
<dbReference type="HAMAP" id="MF_00076">
    <property type="entry name" value="HisB"/>
    <property type="match status" value="1"/>
</dbReference>
<dbReference type="InterPro" id="IPR038494">
    <property type="entry name" value="IGPD_sf"/>
</dbReference>
<dbReference type="InterPro" id="IPR000807">
    <property type="entry name" value="ImidazoleglycerolP_deHydtase"/>
</dbReference>
<dbReference type="InterPro" id="IPR020565">
    <property type="entry name" value="ImidazoleglycerP_deHydtase_CS"/>
</dbReference>
<dbReference type="InterPro" id="IPR020568">
    <property type="entry name" value="Ribosomal_Su5_D2-typ_SF"/>
</dbReference>
<dbReference type="NCBIfam" id="NF002106">
    <property type="entry name" value="PRK00951.1-1"/>
    <property type="match status" value="1"/>
</dbReference>
<dbReference type="NCBIfam" id="NF002109">
    <property type="entry name" value="PRK00951.1-5"/>
    <property type="match status" value="1"/>
</dbReference>
<dbReference type="NCBIfam" id="NF002111">
    <property type="entry name" value="PRK00951.2-1"/>
    <property type="match status" value="1"/>
</dbReference>
<dbReference type="NCBIfam" id="NF002114">
    <property type="entry name" value="PRK00951.2-4"/>
    <property type="match status" value="1"/>
</dbReference>
<dbReference type="PANTHER" id="PTHR23133:SF2">
    <property type="entry name" value="IMIDAZOLEGLYCEROL-PHOSPHATE DEHYDRATASE"/>
    <property type="match status" value="1"/>
</dbReference>
<dbReference type="PANTHER" id="PTHR23133">
    <property type="entry name" value="IMIDAZOLEGLYCEROL-PHOSPHATE DEHYDRATASE HIS7"/>
    <property type="match status" value="1"/>
</dbReference>
<dbReference type="Pfam" id="PF00475">
    <property type="entry name" value="IGPD"/>
    <property type="match status" value="1"/>
</dbReference>
<dbReference type="SUPFAM" id="SSF54211">
    <property type="entry name" value="Ribosomal protein S5 domain 2-like"/>
    <property type="match status" value="2"/>
</dbReference>
<dbReference type="PROSITE" id="PS00954">
    <property type="entry name" value="IGP_DEHYDRATASE_1"/>
    <property type="match status" value="1"/>
</dbReference>
<dbReference type="PROSITE" id="PS00955">
    <property type="entry name" value="IGP_DEHYDRATASE_2"/>
    <property type="match status" value="1"/>
</dbReference>
<reference key="1">
    <citation type="journal article" date="2009" name="BMC Genomics">
        <title>Complete genome sequence of the sugarcane nitrogen-fixing endophyte Gluconacetobacter diazotrophicus Pal5.</title>
        <authorList>
            <person name="Bertalan M."/>
            <person name="Albano R."/>
            <person name="de Padua V."/>
            <person name="Rouws L."/>
            <person name="Rojas C."/>
            <person name="Hemerly A."/>
            <person name="Teixeira K."/>
            <person name="Schwab S."/>
            <person name="Araujo J."/>
            <person name="Oliveira A."/>
            <person name="Franca L."/>
            <person name="Magalhaes V."/>
            <person name="Alqueres S."/>
            <person name="Cardoso A."/>
            <person name="Almeida W."/>
            <person name="Loureiro M.M."/>
            <person name="Nogueira E."/>
            <person name="Cidade D."/>
            <person name="Oliveira D."/>
            <person name="Simao T."/>
            <person name="Macedo J."/>
            <person name="Valadao A."/>
            <person name="Dreschsel M."/>
            <person name="Freitas F."/>
            <person name="Vidal M."/>
            <person name="Guedes H."/>
            <person name="Rodrigues E."/>
            <person name="Meneses C."/>
            <person name="Brioso P."/>
            <person name="Pozzer L."/>
            <person name="Figueiredo D."/>
            <person name="Montano H."/>
            <person name="Junior J."/>
            <person name="de Souza Filho G."/>
            <person name="Martin Quintana Flores V."/>
            <person name="Ferreira B."/>
            <person name="Branco A."/>
            <person name="Gonzalez P."/>
            <person name="Guillobel H."/>
            <person name="Lemos M."/>
            <person name="Seibel L."/>
            <person name="Macedo J."/>
            <person name="Alves-Ferreira M."/>
            <person name="Sachetto-Martins G."/>
            <person name="Coelho A."/>
            <person name="Santos E."/>
            <person name="Amaral G."/>
            <person name="Neves A."/>
            <person name="Pacheco A.B."/>
            <person name="Carvalho D."/>
            <person name="Lery L."/>
            <person name="Bisch P."/>
            <person name="Rossle S.C."/>
            <person name="Urmenyi T."/>
            <person name="Rael Pereira A."/>
            <person name="Silva R."/>
            <person name="Rondinelli E."/>
            <person name="von Kruger W."/>
            <person name="Martins O."/>
            <person name="Baldani J.I."/>
            <person name="Ferreira P.C."/>
        </authorList>
    </citation>
    <scope>NUCLEOTIDE SEQUENCE [LARGE SCALE GENOMIC DNA]</scope>
    <source>
        <strain>ATCC 49037 / DSM 5601 / CCUG 37298 / CIP 103539 / LMG 7603 / PAl5</strain>
    </source>
</reference>
<reference key="2">
    <citation type="journal article" date="2010" name="Stand. Genomic Sci.">
        <title>Two genome sequences of the same bacterial strain, Gluconacetobacter diazotrophicus PAl 5, suggest a new standard in genome sequence submission.</title>
        <authorList>
            <person name="Giongo A."/>
            <person name="Tyler H.L."/>
            <person name="Zipperer U.N."/>
            <person name="Triplett E.W."/>
        </authorList>
    </citation>
    <scope>NUCLEOTIDE SEQUENCE [LARGE SCALE GENOMIC DNA]</scope>
    <source>
        <strain>ATCC 49037 / DSM 5601 / CCUG 37298 / CIP 103539 / LMG 7603 / PAl5</strain>
    </source>
</reference>
<sequence length="198" mass="21616">MDTARTATIHRVTSETDITIRLDLDGTGQSRIATGIGFFDHMLTALARHGMFDLDIEAKGDLHIDFHHTVEDTGIALGQAFVRAIGDKRGIRRFGHALVPLDEALSEVVADISGRPYLAWAVDFTRDKIGEMDTELFEEFFRAFAMSALVTLHVTQKAGRNCHHIAEASFKAAARALRMATEADPRAAGAIPSTKGVL</sequence>
<organism>
    <name type="scientific">Gluconacetobacter diazotrophicus (strain ATCC 49037 / DSM 5601 / CCUG 37298 / CIP 103539 / LMG 7603 / PAl5)</name>
    <dbReference type="NCBI Taxonomy" id="272568"/>
    <lineage>
        <taxon>Bacteria</taxon>
        <taxon>Pseudomonadati</taxon>
        <taxon>Pseudomonadota</taxon>
        <taxon>Alphaproteobacteria</taxon>
        <taxon>Acetobacterales</taxon>
        <taxon>Acetobacteraceae</taxon>
        <taxon>Gluconacetobacter</taxon>
    </lineage>
</organism>
<accession>A9GZY1</accession>
<accession>B5ZJJ7</accession>
<gene>
    <name evidence="1" type="primary">hisB</name>
    <name type="ordered locus">GDI0073</name>
    <name type="ordered locus">Gdia_1619</name>
</gene>
<feature type="chain" id="PRO_1000075248" description="Imidazoleglycerol-phosphate dehydratase">
    <location>
        <begin position="1"/>
        <end position="198"/>
    </location>
</feature>
<proteinExistence type="inferred from homology"/>
<evidence type="ECO:0000255" key="1">
    <source>
        <dbReference type="HAMAP-Rule" id="MF_00076"/>
    </source>
</evidence>